<reference key="1">
    <citation type="journal article" date="2015" name="Microbiology">
        <title>Genome of Methanoregula boonei 6A8 reveals adaptations to oligotrophic peatland environments.</title>
        <authorList>
            <person name="Braeuer S."/>
            <person name="Cadillo-Quiroz H."/>
            <person name="Kyrpides N."/>
            <person name="Woyke T."/>
            <person name="Goodwin L."/>
            <person name="Detter C."/>
            <person name="Podell S."/>
            <person name="Yavitt J.B."/>
            <person name="Zinder S.H."/>
        </authorList>
    </citation>
    <scope>NUCLEOTIDE SEQUENCE [LARGE SCALE GENOMIC DNA]</scope>
    <source>
        <strain>DSM 21154 / JCM 14090 / 6A8</strain>
    </source>
</reference>
<organism>
    <name type="scientific">Methanoregula boonei (strain DSM 21154 / JCM 14090 / 6A8)</name>
    <dbReference type="NCBI Taxonomy" id="456442"/>
    <lineage>
        <taxon>Archaea</taxon>
        <taxon>Methanobacteriati</taxon>
        <taxon>Methanobacteriota</taxon>
        <taxon>Stenosarchaea group</taxon>
        <taxon>Methanomicrobia</taxon>
        <taxon>Methanomicrobiales</taxon>
        <taxon>Methanoregulaceae</taxon>
        <taxon>Methanoregula</taxon>
    </lineage>
</organism>
<accession>A7I9H8</accession>
<name>RL21_METB6</name>
<proteinExistence type="inferred from homology"/>
<gene>
    <name evidence="1" type="primary">rpl21e</name>
    <name type="ordered locus">Mboo_1874</name>
</gene>
<comment type="similarity">
    <text evidence="1">Belongs to the eukaryotic ribosomal protein eL21 family.</text>
</comment>
<keyword id="KW-1185">Reference proteome</keyword>
<keyword id="KW-0687">Ribonucleoprotein</keyword>
<keyword id="KW-0689">Ribosomal protein</keyword>
<protein>
    <recommendedName>
        <fullName evidence="1">Large ribosomal subunit protein eL21</fullName>
    </recommendedName>
    <alternativeName>
        <fullName evidence="2">50S ribosomal protein L21e</fullName>
    </alternativeName>
</protein>
<sequence length="96" mass="10967">MAHHNGPRKKTRYKFKKELRQRGLPPVTSVIQQFEVGEKVHIVVNSSVQKGMPHRRFHGLTGTVIGKRGRAWMLTIHDGNAEKTVIARPQHLKAQK</sequence>
<dbReference type="EMBL" id="CP000780">
    <property type="protein sequence ID" value="ABS56389.1"/>
    <property type="molecule type" value="Genomic_DNA"/>
</dbReference>
<dbReference type="RefSeq" id="WP_012107442.1">
    <property type="nucleotide sequence ID" value="NC_009712.1"/>
</dbReference>
<dbReference type="SMR" id="A7I9H8"/>
<dbReference type="STRING" id="456442.Mboo_1874"/>
<dbReference type="GeneID" id="5410343"/>
<dbReference type="KEGG" id="mbn:Mboo_1874"/>
<dbReference type="eggNOG" id="arCOG04129">
    <property type="taxonomic scope" value="Archaea"/>
</dbReference>
<dbReference type="HOGENOM" id="CLU_103610_1_1_2"/>
<dbReference type="OrthoDB" id="6295at2157"/>
<dbReference type="Proteomes" id="UP000002408">
    <property type="component" value="Chromosome"/>
</dbReference>
<dbReference type="GO" id="GO:1990904">
    <property type="term" value="C:ribonucleoprotein complex"/>
    <property type="evidence" value="ECO:0007669"/>
    <property type="project" value="UniProtKB-KW"/>
</dbReference>
<dbReference type="GO" id="GO:0005840">
    <property type="term" value="C:ribosome"/>
    <property type="evidence" value="ECO:0007669"/>
    <property type="project" value="UniProtKB-KW"/>
</dbReference>
<dbReference type="GO" id="GO:0003735">
    <property type="term" value="F:structural constituent of ribosome"/>
    <property type="evidence" value="ECO:0007669"/>
    <property type="project" value="InterPro"/>
</dbReference>
<dbReference type="GO" id="GO:0006412">
    <property type="term" value="P:translation"/>
    <property type="evidence" value="ECO:0007669"/>
    <property type="project" value="UniProtKB-UniRule"/>
</dbReference>
<dbReference type="FunFam" id="2.30.30.70:FF:000001">
    <property type="entry name" value="60S ribosomal protein L21"/>
    <property type="match status" value="1"/>
</dbReference>
<dbReference type="Gene3D" id="2.30.30.70">
    <property type="entry name" value="Ribosomal protein L21"/>
    <property type="match status" value="1"/>
</dbReference>
<dbReference type="HAMAP" id="MF_00369">
    <property type="entry name" value="Ribosomal_eL21"/>
    <property type="match status" value="1"/>
</dbReference>
<dbReference type="InterPro" id="IPR001147">
    <property type="entry name" value="Ribosomal_eL21"/>
</dbReference>
<dbReference type="InterPro" id="IPR022856">
    <property type="entry name" value="Ribosomal_eL21_arc"/>
</dbReference>
<dbReference type="InterPro" id="IPR018259">
    <property type="entry name" value="Ribosomal_eL21_CS"/>
</dbReference>
<dbReference type="InterPro" id="IPR036948">
    <property type="entry name" value="Ribosomal_eL21_sf"/>
</dbReference>
<dbReference type="InterPro" id="IPR008991">
    <property type="entry name" value="Translation_prot_SH3-like_sf"/>
</dbReference>
<dbReference type="NCBIfam" id="NF003303">
    <property type="entry name" value="PRK04306.1"/>
    <property type="match status" value="1"/>
</dbReference>
<dbReference type="PANTHER" id="PTHR20981">
    <property type="entry name" value="60S RIBOSOMAL PROTEIN L21"/>
    <property type="match status" value="1"/>
</dbReference>
<dbReference type="Pfam" id="PF01157">
    <property type="entry name" value="Ribosomal_L21e"/>
    <property type="match status" value="1"/>
</dbReference>
<dbReference type="SUPFAM" id="SSF50104">
    <property type="entry name" value="Translation proteins SH3-like domain"/>
    <property type="match status" value="1"/>
</dbReference>
<dbReference type="PROSITE" id="PS01171">
    <property type="entry name" value="RIBOSOMAL_L21E"/>
    <property type="match status" value="1"/>
</dbReference>
<evidence type="ECO:0000255" key="1">
    <source>
        <dbReference type="HAMAP-Rule" id="MF_00369"/>
    </source>
</evidence>
<evidence type="ECO:0000305" key="2"/>
<feature type="chain" id="PRO_1000007118" description="Large ribosomal subunit protein eL21">
    <location>
        <begin position="1"/>
        <end position="96"/>
    </location>
</feature>